<gene>
    <name evidence="1" type="primary">fluC</name>
    <name evidence="1" type="synonym">crcB</name>
    <name type="ordered locus">PH1502</name>
</gene>
<sequence>MNAKIIALLIIGGGLGALTRYYISGVLPVYKDFPIGTLIVNSLASFLLGYIYGLLFSGFDISPEWRIFLGTGFCGGLSTFSTFSYETFSLLREGEIWLAFANITTNILVTIFLVFLGFILARR</sequence>
<reference key="1">
    <citation type="journal article" date="1998" name="DNA Res.">
        <title>Complete sequence and gene organization of the genome of a hyper-thermophilic archaebacterium, Pyrococcus horikoshii OT3.</title>
        <authorList>
            <person name="Kawarabayasi Y."/>
            <person name="Sawada M."/>
            <person name="Horikawa H."/>
            <person name="Haikawa Y."/>
            <person name="Hino Y."/>
            <person name="Yamamoto S."/>
            <person name="Sekine M."/>
            <person name="Baba S."/>
            <person name="Kosugi H."/>
            <person name="Hosoyama A."/>
            <person name="Nagai Y."/>
            <person name="Sakai M."/>
            <person name="Ogura K."/>
            <person name="Otsuka R."/>
            <person name="Nakazawa H."/>
            <person name="Takamiya M."/>
            <person name="Ohfuku Y."/>
            <person name="Funahashi T."/>
            <person name="Tanaka T."/>
            <person name="Kudoh Y."/>
            <person name="Yamazaki J."/>
            <person name="Kushida N."/>
            <person name="Oguchi A."/>
            <person name="Aoki K."/>
            <person name="Yoshizawa T."/>
            <person name="Nakamura Y."/>
            <person name="Robb F.T."/>
            <person name="Horikoshi K."/>
            <person name="Masuchi Y."/>
            <person name="Shizuya H."/>
            <person name="Kikuchi H."/>
        </authorList>
    </citation>
    <scope>NUCLEOTIDE SEQUENCE [LARGE SCALE GENOMIC DNA]</scope>
    <source>
        <strain>ATCC 700860 / DSM 12428 / JCM 9974 / NBRC 100139 / OT-3</strain>
    </source>
</reference>
<feature type="chain" id="PRO_0000110235" description="Fluoride-specific ion channel FluC">
    <location>
        <begin position="1"/>
        <end position="123"/>
    </location>
</feature>
<feature type="transmembrane region" description="Helical" evidence="1">
    <location>
        <begin position="5"/>
        <end position="25"/>
    </location>
</feature>
<feature type="transmembrane region" description="Helical" evidence="1">
    <location>
        <begin position="35"/>
        <end position="55"/>
    </location>
</feature>
<feature type="transmembrane region" description="Helical" evidence="1">
    <location>
        <begin position="67"/>
        <end position="87"/>
    </location>
</feature>
<feature type="transmembrane region" description="Helical" evidence="1">
    <location>
        <begin position="100"/>
        <end position="120"/>
    </location>
</feature>
<feature type="binding site" evidence="1">
    <location>
        <position position="75"/>
    </location>
    <ligand>
        <name>Na(+)</name>
        <dbReference type="ChEBI" id="CHEBI:29101"/>
        <note>structural</note>
    </ligand>
</feature>
<feature type="binding site" evidence="1">
    <location>
        <position position="78"/>
    </location>
    <ligand>
        <name>Na(+)</name>
        <dbReference type="ChEBI" id="CHEBI:29101"/>
        <note>structural</note>
    </ligand>
</feature>
<accession>O59171</accession>
<protein>
    <recommendedName>
        <fullName evidence="1">Fluoride-specific ion channel FluC</fullName>
    </recommendedName>
</protein>
<proteinExistence type="inferred from homology"/>
<comment type="function">
    <text evidence="1">Fluoride-specific ion channel. Important for reducing fluoride concentration in the cell, thus reducing its toxicity.</text>
</comment>
<comment type="catalytic activity">
    <reaction evidence="1">
        <text>fluoride(in) = fluoride(out)</text>
        <dbReference type="Rhea" id="RHEA:76159"/>
        <dbReference type="ChEBI" id="CHEBI:17051"/>
    </reaction>
    <physiologicalReaction direction="left-to-right" evidence="1">
        <dbReference type="Rhea" id="RHEA:76160"/>
    </physiologicalReaction>
</comment>
<comment type="activity regulation">
    <text evidence="1">Na(+) is not transported, but it plays an essential structural role and its presence is essential for fluoride channel function.</text>
</comment>
<comment type="subcellular location">
    <subcellularLocation>
        <location evidence="1">Cell membrane</location>
        <topology evidence="1">Multi-pass membrane protein</topology>
    </subcellularLocation>
</comment>
<comment type="similarity">
    <text evidence="1">Belongs to the fluoride channel Fluc/FEX (TC 1.A.43) family.</text>
</comment>
<keyword id="KW-1003">Cell membrane</keyword>
<keyword id="KW-0407">Ion channel</keyword>
<keyword id="KW-0406">Ion transport</keyword>
<keyword id="KW-0472">Membrane</keyword>
<keyword id="KW-0479">Metal-binding</keyword>
<keyword id="KW-0915">Sodium</keyword>
<keyword id="KW-0812">Transmembrane</keyword>
<keyword id="KW-1133">Transmembrane helix</keyword>
<keyword id="KW-0813">Transport</keyword>
<name>FLUC_PYRHO</name>
<dbReference type="EMBL" id="BA000001">
    <property type="protein sequence ID" value="BAA30610.1"/>
    <property type="molecule type" value="Genomic_DNA"/>
</dbReference>
<dbReference type="PIR" id="B71026">
    <property type="entry name" value="B71026"/>
</dbReference>
<dbReference type="RefSeq" id="WP_010885581.1">
    <property type="nucleotide sequence ID" value="NC_000961.1"/>
</dbReference>
<dbReference type="SMR" id="O59171"/>
<dbReference type="STRING" id="70601.gene:9378484"/>
<dbReference type="EnsemblBacteria" id="BAA30610">
    <property type="protein sequence ID" value="BAA30610"/>
    <property type="gene ID" value="BAA30610"/>
</dbReference>
<dbReference type="GeneID" id="1443820"/>
<dbReference type="KEGG" id="pho:PH1502"/>
<dbReference type="eggNOG" id="arCOG04701">
    <property type="taxonomic scope" value="Archaea"/>
</dbReference>
<dbReference type="OrthoDB" id="253428at2157"/>
<dbReference type="Proteomes" id="UP000000752">
    <property type="component" value="Chromosome"/>
</dbReference>
<dbReference type="GO" id="GO:0005886">
    <property type="term" value="C:plasma membrane"/>
    <property type="evidence" value="ECO:0007669"/>
    <property type="project" value="UniProtKB-SubCell"/>
</dbReference>
<dbReference type="GO" id="GO:0062054">
    <property type="term" value="F:fluoride channel activity"/>
    <property type="evidence" value="ECO:0007669"/>
    <property type="project" value="UniProtKB-UniRule"/>
</dbReference>
<dbReference type="GO" id="GO:0046872">
    <property type="term" value="F:metal ion binding"/>
    <property type="evidence" value="ECO:0007669"/>
    <property type="project" value="UniProtKB-KW"/>
</dbReference>
<dbReference type="GO" id="GO:0140114">
    <property type="term" value="P:cellular detoxification of fluoride"/>
    <property type="evidence" value="ECO:0007669"/>
    <property type="project" value="UniProtKB-UniRule"/>
</dbReference>
<dbReference type="HAMAP" id="MF_00454">
    <property type="entry name" value="FluC"/>
    <property type="match status" value="1"/>
</dbReference>
<dbReference type="InterPro" id="IPR003691">
    <property type="entry name" value="FluC"/>
</dbReference>
<dbReference type="NCBIfam" id="TIGR00494">
    <property type="entry name" value="crcB"/>
    <property type="match status" value="1"/>
</dbReference>
<dbReference type="PANTHER" id="PTHR28259">
    <property type="entry name" value="FLUORIDE EXPORT PROTEIN 1-RELATED"/>
    <property type="match status" value="1"/>
</dbReference>
<dbReference type="PANTHER" id="PTHR28259:SF1">
    <property type="entry name" value="FLUORIDE EXPORT PROTEIN 1-RELATED"/>
    <property type="match status" value="1"/>
</dbReference>
<dbReference type="Pfam" id="PF02537">
    <property type="entry name" value="CRCB"/>
    <property type="match status" value="1"/>
</dbReference>
<organism>
    <name type="scientific">Pyrococcus horikoshii (strain ATCC 700860 / DSM 12428 / JCM 9974 / NBRC 100139 / OT-3)</name>
    <dbReference type="NCBI Taxonomy" id="70601"/>
    <lineage>
        <taxon>Archaea</taxon>
        <taxon>Methanobacteriati</taxon>
        <taxon>Methanobacteriota</taxon>
        <taxon>Thermococci</taxon>
        <taxon>Thermococcales</taxon>
        <taxon>Thermococcaceae</taxon>
        <taxon>Pyrococcus</taxon>
    </lineage>
</organism>
<evidence type="ECO:0000255" key="1">
    <source>
        <dbReference type="HAMAP-Rule" id="MF_00454"/>
    </source>
</evidence>